<protein>
    <recommendedName>
        <fullName>Protein YpjC</fullName>
    </recommendedName>
</protein>
<keyword id="KW-1185">Reference proteome</keyword>
<sequence length="160" mass="18024">MLVSKSNGFNASAVLGSGSYNENKSSKHMELLAHSILKLICKEAASETYRGALETLQKMMSECIYQEGNAFVIMGAGEQLKRIKYEVGENNLKVFNVHFNNNHELVSSGEPDVICLSKQVWENLLIKLKLENNENVFSETKKLSNKNNADQFFECAKRNE</sequence>
<organism>
    <name type="scientific">Escherichia coli (strain K12)</name>
    <dbReference type="NCBI Taxonomy" id="83333"/>
    <lineage>
        <taxon>Bacteria</taxon>
        <taxon>Pseudomonadati</taxon>
        <taxon>Pseudomonadota</taxon>
        <taxon>Gammaproteobacteria</taxon>
        <taxon>Enterobacterales</taxon>
        <taxon>Enterobacteriaceae</taxon>
        <taxon>Escherichia</taxon>
    </lineage>
</organism>
<name>YPJC_ECOLI</name>
<dbReference type="EMBL" id="U00096">
    <property type="protein sequence ID" value="AYC08237.1"/>
    <property type="molecule type" value="Genomic_DNA"/>
</dbReference>
<dbReference type="EMBL" id="AP009048">
    <property type="protein sequence ID" value="BAE76776.1"/>
    <property type="molecule type" value="Genomic_DNA"/>
</dbReference>
<dbReference type="PIR" id="D65044">
    <property type="entry name" value="D65044"/>
</dbReference>
<dbReference type="BioGRID" id="4262255">
    <property type="interactions" value="132"/>
</dbReference>
<dbReference type="FunCoup" id="P76613">
    <property type="interactions" value="171"/>
</dbReference>
<dbReference type="EnsemblBacteria" id="AYC08237">
    <property type="protein sequence ID" value="AYC08237"/>
    <property type="gene ID" value="b2650"/>
</dbReference>
<dbReference type="KEGG" id="ecj:JW5424"/>
<dbReference type="KEGG" id="ecoc:C3026_14635"/>
<dbReference type="PATRIC" id="fig|83333.103.peg.3537"/>
<dbReference type="EchoBASE" id="EB3292"/>
<dbReference type="HOGENOM" id="CLU_106218_1_0_6"/>
<dbReference type="InParanoid" id="P76613"/>
<dbReference type="BioCyc" id="EcoCyc:G7385-MONOMER"/>
<dbReference type="PRO" id="PR:P76613"/>
<dbReference type="Proteomes" id="UP000000625">
    <property type="component" value="Chromosome"/>
</dbReference>
<dbReference type="InterPro" id="IPR020227">
    <property type="entry name" value="DUF5507"/>
</dbReference>
<dbReference type="Pfam" id="PF17612">
    <property type="entry name" value="DUF5507"/>
    <property type="match status" value="1"/>
</dbReference>
<evidence type="ECO:0000305" key="1"/>
<proteinExistence type="predicted"/>
<gene>
    <name type="primary">ypjC</name>
    <name type="ordered locus">b2650</name>
    <name type="ordered locus">JW5424</name>
</gene>
<accession>P76613</accession>
<accession>A0A385XJY8</accession>
<accession>Q2MAD0</accession>
<feature type="chain" id="PRO_0000169287" description="Protein YpjC">
    <location>
        <begin position="1"/>
        <end position="160"/>
    </location>
</feature>
<comment type="miscellaneous">
    <text evidence="1">Missing about 300 C-terminal amino acids compared to orthologs.</text>
</comment>
<reference key="1">
    <citation type="journal article" date="1997" name="Science">
        <title>The complete genome sequence of Escherichia coli K-12.</title>
        <authorList>
            <person name="Blattner F.R."/>
            <person name="Plunkett G. III"/>
            <person name="Bloch C.A."/>
            <person name="Perna N.T."/>
            <person name="Burland V."/>
            <person name="Riley M."/>
            <person name="Collado-Vides J."/>
            <person name="Glasner J.D."/>
            <person name="Rode C.K."/>
            <person name="Mayhew G.F."/>
            <person name="Gregor J."/>
            <person name="Davis N.W."/>
            <person name="Kirkpatrick H.A."/>
            <person name="Goeden M.A."/>
            <person name="Rose D.J."/>
            <person name="Mau B."/>
            <person name="Shao Y."/>
        </authorList>
    </citation>
    <scope>NUCLEOTIDE SEQUENCE [LARGE SCALE GENOMIC DNA]</scope>
    <source>
        <strain>K12 / MG1655 / ATCC 47076</strain>
    </source>
</reference>
<reference key="2">
    <citation type="journal article" date="2006" name="Mol. Syst. Biol.">
        <title>Highly accurate genome sequences of Escherichia coli K-12 strains MG1655 and W3110.</title>
        <authorList>
            <person name="Hayashi K."/>
            <person name="Morooka N."/>
            <person name="Yamamoto Y."/>
            <person name="Fujita K."/>
            <person name="Isono K."/>
            <person name="Choi S."/>
            <person name="Ohtsubo E."/>
            <person name="Baba T."/>
            <person name="Wanner B.L."/>
            <person name="Mori H."/>
            <person name="Horiuchi T."/>
        </authorList>
    </citation>
    <scope>NUCLEOTIDE SEQUENCE [LARGE SCALE GENOMIC DNA]</scope>
    <source>
        <strain>K12 / W3110 / ATCC 27325 / DSM 5911</strain>
    </source>
</reference>